<sequence>MLGYILWTSLYVLLIVIPLILVVAYYTYAERKVIGYMQDRIGPNRVGSFGLLQPIFDALKLFLKEIIVPTNSNRYLFFIAPILAFAPAYAAWAVIPFSKGVVLSDMNLGLLYILAMTSFSIYGIVIAGWASNSKYSLFGALRAGAQVISYELAMGFAIVGVVIAAGSMGITGIIEAQSGGIWHWYFIPLFPLFIVYFIAGIAETNRAPFDVVEGESEIVAGHHIEYTGSRFALFFLAEYANMILISILTSIMFLGGWNSPFQATALESIFGFVPGVVWLFAKTGIFMFMFLWVRATYPRYRYDQIMRLGWKIFIPLTFVWVVIVACMVRLGVGPWW</sequence>
<proteinExistence type="inferred from homology"/>
<accession>Q0BK58</accession>
<keyword id="KW-0997">Cell inner membrane</keyword>
<keyword id="KW-1003">Cell membrane</keyword>
<keyword id="KW-0472">Membrane</keyword>
<keyword id="KW-0520">NAD</keyword>
<keyword id="KW-0874">Quinone</keyword>
<keyword id="KW-1278">Translocase</keyword>
<keyword id="KW-0812">Transmembrane</keyword>
<keyword id="KW-1133">Transmembrane helix</keyword>
<keyword id="KW-0830">Ubiquinone</keyword>
<reference key="1">
    <citation type="journal article" date="2006" name="J. Bacteriol.">
        <title>Chromosome rearrangement and diversification of Francisella tularensis revealed by the type B (OSU18) genome sequence.</title>
        <authorList>
            <person name="Petrosino J.F."/>
            <person name="Xiang Q."/>
            <person name="Karpathy S.E."/>
            <person name="Jiang H."/>
            <person name="Yerrapragada S."/>
            <person name="Liu Y."/>
            <person name="Gioia J."/>
            <person name="Hemphill L."/>
            <person name="Gonzalez A."/>
            <person name="Raghavan T.M."/>
            <person name="Uzman A."/>
            <person name="Fox G.E."/>
            <person name="Highlander S."/>
            <person name="Reichard M."/>
            <person name="Morton R.J."/>
            <person name="Clinkenbeard K.D."/>
            <person name="Weinstock G.M."/>
        </authorList>
    </citation>
    <scope>NUCLEOTIDE SEQUENCE [LARGE SCALE GENOMIC DNA]</scope>
    <source>
        <strain>OSU18</strain>
    </source>
</reference>
<feature type="chain" id="PRO_0000298812" description="NADH-quinone oxidoreductase subunit H">
    <location>
        <begin position="1"/>
        <end position="336"/>
    </location>
</feature>
<feature type="transmembrane region" description="Helical" evidence="1">
    <location>
        <begin position="4"/>
        <end position="24"/>
    </location>
</feature>
<feature type="transmembrane region" description="Helical" evidence="1">
    <location>
        <begin position="75"/>
        <end position="95"/>
    </location>
</feature>
<feature type="transmembrane region" description="Helical" evidence="1">
    <location>
        <begin position="108"/>
        <end position="128"/>
    </location>
</feature>
<feature type="transmembrane region" description="Helical" evidence="1">
    <location>
        <begin position="154"/>
        <end position="174"/>
    </location>
</feature>
<feature type="transmembrane region" description="Helical" evidence="1">
    <location>
        <begin position="181"/>
        <end position="201"/>
    </location>
</feature>
<feature type="transmembrane region" description="Helical" evidence="1">
    <location>
        <begin position="233"/>
        <end position="253"/>
    </location>
</feature>
<feature type="transmembrane region" description="Helical" evidence="1">
    <location>
        <begin position="272"/>
        <end position="292"/>
    </location>
</feature>
<feature type="transmembrane region" description="Helical" evidence="1">
    <location>
        <begin position="308"/>
        <end position="328"/>
    </location>
</feature>
<gene>
    <name evidence="1" type="primary">nuoH</name>
    <name type="ordered locus">FTH_1759</name>
</gene>
<organism>
    <name type="scientific">Francisella tularensis subsp. holarctica (strain OSU18)</name>
    <dbReference type="NCBI Taxonomy" id="393011"/>
    <lineage>
        <taxon>Bacteria</taxon>
        <taxon>Pseudomonadati</taxon>
        <taxon>Pseudomonadota</taxon>
        <taxon>Gammaproteobacteria</taxon>
        <taxon>Thiotrichales</taxon>
        <taxon>Francisellaceae</taxon>
        <taxon>Francisella</taxon>
    </lineage>
</organism>
<protein>
    <recommendedName>
        <fullName evidence="1">NADH-quinone oxidoreductase subunit H</fullName>
        <ecNumber evidence="1">7.1.1.-</ecNumber>
    </recommendedName>
    <alternativeName>
        <fullName evidence="1">NADH dehydrogenase I subunit H</fullName>
    </alternativeName>
    <alternativeName>
        <fullName evidence="1">NDH-1 subunit H</fullName>
    </alternativeName>
</protein>
<evidence type="ECO:0000255" key="1">
    <source>
        <dbReference type="HAMAP-Rule" id="MF_01350"/>
    </source>
</evidence>
<dbReference type="EC" id="7.1.1.-" evidence="1"/>
<dbReference type="EMBL" id="CP000437">
    <property type="protein sequence ID" value="ABI83526.1"/>
    <property type="molecule type" value="Genomic_DNA"/>
</dbReference>
<dbReference type="RefSeq" id="WP_003017378.1">
    <property type="nucleotide sequence ID" value="NC_017463.1"/>
</dbReference>
<dbReference type="SMR" id="Q0BK58"/>
<dbReference type="KEGG" id="fth:FTH_1759"/>
<dbReference type="GO" id="GO:0005886">
    <property type="term" value="C:plasma membrane"/>
    <property type="evidence" value="ECO:0007669"/>
    <property type="project" value="UniProtKB-SubCell"/>
</dbReference>
<dbReference type="GO" id="GO:0003954">
    <property type="term" value="F:NADH dehydrogenase activity"/>
    <property type="evidence" value="ECO:0007669"/>
    <property type="project" value="TreeGrafter"/>
</dbReference>
<dbReference type="GO" id="GO:0016655">
    <property type="term" value="F:oxidoreductase activity, acting on NAD(P)H, quinone or similar compound as acceptor"/>
    <property type="evidence" value="ECO:0007669"/>
    <property type="project" value="UniProtKB-UniRule"/>
</dbReference>
<dbReference type="GO" id="GO:0048038">
    <property type="term" value="F:quinone binding"/>
    <property type="evidence" value="ECO:0007669"/>
    <property type="project" value="UniProtKB-KW"/>
</dbReference>
<dbReference type="GO" id="GO:0009060">
    <property type="term" value="P:aerobic respiration"/>
    <property type="evidence" value="ECO:0007669"/>
    <property type="project" value="TreeGrafter"/>
</dbReference>
<dbReference type="HAMAP" id="MF_01350">
    <property type="entry name" value="NDH1_NuoH"/>
    <property type="match status" value="1"/>
</dbReference>
<dbReference type="InterPro" id="IPR001694">
    <property type="entry name" value="NADH_UbQ_OxRdtase_su1/FPO"/>
</dbReference>
<dbReference type="InterPro" id="IPR018086">
    <property type="entry name" value="NADH_UbQ_OxRdtase_su1_CS"/>
</dbReference>
<dbReference type="NCBIfam" id="NF004741">
    <property type="entry name" value="PRK06076.1-2"/>
    <property type="match status" value="1"/>
</dbReference>
<dbReference type="PANTHER" id="PTHR11432">
    <property type="entry name" value="NADH DEHYDROGENASE SUBUNIT 1"/>
    <property type="match status" value="1"/>
</dbReference>
<dbReference type="PANTHER" id="PTHR11432:SF3">
    <property type="entry name" value="NADH-UBIQUINONE OXIDOREDUCTASE CHAIN 1"/>
    <property type="match status" value="1"/>
</dbReference>
<dbReference type="Pfam" id="PF00146">
    <property type="entry name" value="NADHdh"/>
    <property type="match status" value="1"/>
</dbReference>
<dbReference type="PROSITE" id="PS00667">
    <property type="entry name" value="COMPLEX1_ND1_1"/>
    <property type="match status" value="1"/>
</dbReference>
<dbReference type="PROSITE" id="PS00668">
    <property type="entry name" value="COMPLEX1_ND1_2"/>
    <property type="match status" value="1"/>
</dbReference>
<name>NUOH_FRATO</name>
<comment type="function">
    <text evidence="1">NDH-1 shuttles electrons from NADH, via FMN and iron-sulfur (Fe-S) centers, to quinones in the respiratory chain. The immediate electron acceptor for the enzyme in this species is believed to be ubiquinone. Couples the redox reaction to proton translocation (for every two electrons transferred, four hydrogen ions are translocated across the cytoplasmic membrane), and thus conserves the redox energy in a proton gradient. This subunit may bind ubiquinone.</text>
</comment>
<comment type="catalytic activity">
    <reaction evidence="1">
        <text>a quinone + NADH + 5 H(+)(in) = a quinol + NAD(+) + 4 H(+)(out)</text>
        <dbReference type="Rhea" id="RHEA:57888"/>
        <dbReference type="ChEBI" id="CHEBI:15378"/>
        <dbReference type="ChEBI" id="CHEBI:24646"/>
        <dbReference type="ChEBI" id="CHEBI:57540"/>
        <dbReference type="ChEBI" id="CHEBI:57945"/>
        <dbReference type="ChEBI" id="CHEBI:132124"/>
    </reaction>
</comment>
<comment type="subunit">
    <text evidence="1">NDH-1 is composed of 14 different subunits. Subunits NuoA, H, J, K, L, M, N constitute the membrane sector of the complex.</text>
</comment>
<comment type="subcellular location">
    <subcellularLocation>
        <location evidence="1">Cell inner membrane</location>
        <topology evidence="1">Multi-pass membrane protein</topology>
    </subcellularLocation>
</comment>
<comment type="similarity">
    <text evidence="1">Belongs to the complex I subunit 1 family.</text>
</comment>